<accession>Q8G9F9</accession>
<feature type="initiator methionine" description="Removed" evidence="1 2">
    <location>
        <position position="1"/>
    </location>
</feature>
<feature type="chain" id="PRO_0000418615" description="Isonitrile hydratase">
    <location>
        <begin position="2"/>
        <end position="228"/>
    </location>
</feature>
<feature type="active site" evidence="3">
    <location>
        <position position="101"/>
    </location>
</feature>
<feature type="mutagenesis site" description="Almost no change in activity." evidence="2">
    <original>E</original>
    <variation>Q</variation>
    <location>
        <position position="79"/>
    </location>
</feature>
<feature type="mutagenesis site" description="Almost no change in activity." evidence="2">
    <original>E</original>
    <variation>Q</variation>
    <location>
        <position position="81"/>
    </location>
</feature>
<feature type="mutagenesis site" description="Lack of activity." evidence="2">
    <original>C</original>
    <variation>A</variation>
    <location>
        <position position="101"/>
    </location>
</feature>
<feature type="mutagenesis site" description="Strong decrease in activity." evidence="2">
    <original>T</original>
    <variation>A</variation>
    <location>
        <position position="102"/>
    </location>
</feature>
<evidence type="ECO:0000269" key="1">
    <source>
    </source>
</evidence>
<evidence type="ECO:0000269" key="2">
    <source>
    </source>
</evidence>
<evidence type="ECO:0000305" key="3"/>
<evidence type="ECO:0000305" key="4">
    <source>
    </source>
</evidence>
<name>INHA_PSEPU</name>
<protein>
    <recommendedName>
        <fullName>Isonitrile hydratase</fullName>
        <ecNumber>4.2.1.103</ecNumber>
    </recommendedName>
    <alternativeName>
        <fullName>Cyclohexyl-isocyanide hydratase</fullName>
    </alternativeName>
</protein>
<gene>
    <name type="primary">inhA</name>
</gene>
<dbReference type="EC" id="4.2.1.103"/>
<dbReference type="EMBL" id="AB088117">
    <property type="protein sequence ID" value="BAC41251.1"/>
    <property type="molecule type" value="Genomic_DNA"/>
</dbReference>
<dbReference type="SMR" id="Q8G9F9"/>
<dbReference type="KEGG" id="ag:BAC41251"/>
<dbReference type="BioCyc" id="MetaCyc:MONOMER-15823"/>
<dbReference type="BRENDA" id="4.2.1.103">
    <property type="organism ID" value="5092"/>
</dbReference>
<dbReference type="GO" id="GO:0050549">
    <property type="term" value="F:cyclohexyl-isocyanide hydratase activity"/>
    <property type="evidence" value="ECO:0000314"/>
    <property type="project" value="UniProtKB"/>
</dbReference>
<dbReference type="GO" id="GO:0006355">
    <property type="term" value="P:regulation of DNA-templated transcription"/>
    <property type="evidence" value="ECO:0007669"/>
    <property type="project" value="TreeGrafter"/>
</dbReference>
<dbReference type="CDD" id="cd03139">
    <property type="entry name" value="GATase1_PfpI_2"/>
    <property type="match status" value="1"/>
</dbReference>
<dbReference type="Gene3D" id="3.40.50.880">
    <property type="match status" value="1"/>
</dbReference>
<dbReference type="InterPro" id="IPR029062">
    <property type="entry name" value="Class_I_gatase-like"/>
</dbReference>
<dbReference type="InterPro" id="IPR002818">
    <property type="entry name" value="DJ-1/PfpI"/>
</dbReference>
<dbReference type="InterPro" id="IPR052158">
    <property type="entry name" value="INH-QAR"/>
</dbReference>
<dbReference type="PANTHER" id="PTHR43130">
    <property type="entry name" value="ARAC-FAMILY TRANSCRIPTIONAL REGULATOR"/>
    <property type="match status" value="1"/>
</dbReference>
<dbReference type="PANTHER" id="PTHR43130:SF2">
    <property type="entry name" value="DJ-1_PFPI DOMAIN-CONTAINING PROTEIN"/>
    <property type="match status" value="1"/>
</dbReference>
<dbReference type="Pfam" id="PF01965">
    <property type="entry name" value="DJ-1_PfpI"/>
    <property type="match status" value="1"/>
</dbReference>
<dbReference type="SUPFAM" id="SSF52317">
    <property type="entry name" value="Class I glutamine amidotransferase-like"/>
    <property type="match status" value="1"/>
</dbReference>
<organism>
    <name type="scientific">Pseudomonas putida</name>
    <name type="common">Arthrobacter siderocapsulatus</name>
    <dbReference type="NCBI Taxonomy" id="303"/>
    <lineage>
        <taxon>Bacteria</taxon>
        <taxon>Pseudomonadati</taxon>
        <taxon>Pseudomonadota</taxon>
        <taxon>Gammaproteobacteria</taxon>
        <taxon>Pseudomonadales</taxon>
        <taxon>Pseudomonadaceae</taxon>
        <taxon>Pseudomonas</taxon>
    </lineage>
</organism>
<sequence>MALQIGFLLFPQVQQLDLTGPYDVLASLPDVQVHLVWKDLVPVTSSTGLQLKPTTTFEDCPVLDVICVPGGAGVGPLMEDEQTLDFIRSQAAQARYVTSVCTGSLVLGAAGLLQGKRATTHWAYHDLLPTLGAIPVKDRVVRDGNLFTGGGITAGIDFALTLAQELVGVDTAQLVQLQLEYAPAPPFDSGSPDTAPSAVVDEARKRAAPSLKLRTEITERAAAKLNLR</sequence>
<reference key="1">
    <citation type="journal article" date="2002" name="J. Biol. Chem.">
        <title>Isonitrile hydratase from Pseudomonas putida N19-2. Cloning, sequencing, gene expression, and identification of its active acid residue.</title>
        <authorList>
            <person name="Goda M."/>
            <person name="Hashimoto Y."/>
            <person name="Takase M."/>
            <person name="Herai S."/>
            <person name="Iwahara Y."/>
            <person name="Higashibata H."/>
            <person name="Kobayashi M."/>
        </authorList>
    </citation>
    <scope>NUCLEOTIDE SEQUENCE [GENOMIC DNA]</scope>
    <scope>PROTEIN SEQUENCE OF 2-79; 117-201 AND 206-228</scope>
    <scope>FUNCTION</scope>
    <scope>CATALYTIC ACTIVITY</scope>
    <scope>SUBUNIT</scope>
    <scope>GENE NAME</scope>
    <scope>MUTAGENESIS OF GLU-79; GLU-81; CYS-101 AND THR-102</scope>
    <source>
        <strain>N19-2</strain>
    </source>
</reference>
<reference key="2">
    <citation type="journal article" date="2001" name="J. Biol. Chem.">
        <title>Discovery of a novel enzyme, isonitrile hydratase, involved in nitrogen-carbon triple bond cleavage.</title>
        <authorList>
            <person name="Goda M."/>
            <person name="Hashimoto Y."/>
            <person name="Shimizu S."/>
            <person name="Kobayashi M."/>
        </authorList>
    </citation>
    <scope>PROTEIN SEQUENCE OF 2-11</scope>
    <scope>FUNCTION</scope>
    <scope>CATALYTIC ACTIVITY</scope>
    <scope>ACTIVITY REGULATION</scope>
    <scope>BIOPHYSICOCHEMICAL PROPERTIES</scope>
    <scope>SUBUNIT</scope>
    <source>
        <strain>N19-2</strain>
    </source>
</reference>
<proteinExistence type="evidence at protein level"/>
<comment type="function">
    <text evidence="1 2">Catalyzes the hydration of cyclohexyl isocyanide to N-cyclohexylformamide. Acts on various isonitriles, but not on nitriles or amides. Probably involved in detoxification.</text>
</comment>
<comment type="catalytic activity">
    <reaction evidence="1 2">
        <text>N-cyclohexylformamide = cyclohexyl isocyanide + H2O</text>
        <dbReference type="Rhea" id="RHEA:18197"/>
        <dbReference type="ChEBI" id="CHEBI:15377"/>
        <dbReference type="ChEBI" id="CHEBI:17945"/>
        <dbReference type="ChEBI" id="CHEBI:17966"/>
        <dbReference type="EC" id="4.2.1.103"/>
    </reaction>
</comment>
<comment type="activity regulation">
    <text evidence="1">Sensitive to thiol reagents and oxidizing reagents, but is not influenced by chelators or reducing reagents.</text>
</comment>
<comment type="biophysicochemical properties">
    <kinetics>
        <KM evidence="1">16.2 mM for cyclohexyl isocyanide</KM>
        <Vmax evidence="1">39.6 umol/min/mg enzyme</Vmax>
    </kinetics>
    <phDependence>
        <text evidence="1">Optimum pH is 6.0-6.5.</text>
    </phDependence>
    <temperatureDependence>
        <text evidence="1">Optimum temperature is 35 degrees Celsius. Activity is rapidly lost above 40 degrees Celsius.</text>
    </temperatureDependence>
</comment>
<comment type="subunit">
    <text evidence="1 2">Homodimer.</text>
</comment>
<comment type="miscellaneous">
    <text evidence="4">Does not require metal ion for activity.</text>
</comment>
<keyword id="KW-0903">Direct protein sequencing</keyword>
<keyword id="KW-0456">Lyase</keyword>